<evidence type="ECO:0000255" key="1">
    <source>
        <dbReference type="HAMAP-Rule" id="MF_00952"/>
    </source>
</evidence>
<evidence type="ECO:0000255" key="2">
    <source>
        <dbReference type="PROSITE-ProRule" id="PRU01383"/>
    </source>
</evidence>
<evidence type="ECO:0000256" key="3">
    <source>
        <dbReference type="SAM" id="MobiDB-lite"/>
    </source>
</evidence>
<evidence type="ECO:0000269" key="4">
    <source>
    </source>
</evidence>
<sequence length="952" mass="103585">MSPTSETAKGGRRLVIVESPAKAKTIKGYLGPGYVVEASVGHIRDLPSGAAEVPEKYTGEVRRLGVDVEHDFQPIYVVNADKKSQVKKLKDLLKESDELFLATDEDREGEAIAWHLQEVLKPKIPVKRMVFHEITKDAIRAAVANPRELNQKLVDAQETRRILDRLYGYEVSPVLWKKVMPRLSAGRVQSVATRLVVERERERIAFRSAEYWDLTGTFATGRAGDASDPSSLVARLQTVDGRRVAQGRDFDSLGQLKSANTLHLDEANARALAAALENTRFAVRSVESKPYRRSPYAPFRTTTLQQEASRKLGFGAKSTMQVAQKLYENGYITYMRTDSTTLSDTAVSAARAQVTQLYGADYLPPQPRTYAGKVKNAQEAHEAIRPSGDRFRTPAETGLTGDQFKLYELIWKRTVASQMKDATGNSVTVKIGGAASDGRDVEFSASGKTITFHGFLKAYVEGADDPNAELDDRERRLPQVAEGDALTAEEITVDGHATKPPARYTEASLVKELEEREIGRPSTYASIIGTILDRGYVFKKGTALVPSFLSFAVVNLLEKHFGRLVDYDFTARMEDDLDRIARGEAQSVPWLRRFYFGEGDGTGGGGAADAGNGDGDHLGGLKELVTDLGAIDAREVSSFPVGNDIKLRVGRYGPYVERGEKDAENHQRADVPEDLAPDELSVELAEELLAKPSGDFELGTDPATGHAIVAKDGRYGPYVTEVLPEGTPKTGKNAVKPRTASLFKSMSLDTVTLDDALKLMSLPRVVGADAEGVEITAQNGRYGPYLKKGTDSRSLQTEDQLFEITLEEALAIYAQPKQRGRAAAKPPLKELGTDPVSEKPVVVKDGRFGPYVTDGETNATLRSDDSVEEITPERGYELLAEKRAKGPAKKTAKKAVKKTAAKKAPAKKAAATKKTAAAKTTAAKKTAAKSTAKKTTAKTAAKKATASKTSED</sequence>
<protein>
    <recommendedName>
        <fullName evidence="1">DNA topoisomerase 1</fullName>
        <ecNumber evidence="1">5.6.2.1</ecNumber>
    </recommendedName>
    <alternativeName>
        <fullName evidence="1">DNA topoisomerase I</fullName>
    </alternativeName>
    <alternativeName>
        <fullName>Omega-protein</fullName>
    </alternativeName>
    <alternativeName>
        <fullName>Relaxing enzyme</fullName>
    </alternativeName>
    <alternativeName>
        <fullName>Swivelase</fullName>
    </alternativeName>
    <alternativeName>
        <fullName>Untwisting enzyme</fullName>
    </alternativeName>
</protein>
<organism>
    <name type="scientific">Streptomyces coelicolor (strain ATCC BAA-471 / A3(2) / M145)</name>
    <dbReference type="NCBI Taxonomy" id="100226"/>
    <lineage>
        <taxon>Bacteria</taxon>
        <taxon>Bacillati</taxon>
        <taxon>Actinomycetota</taxon>
        <taxon>Actinomycetes</taxon>
        <taxon>Kitasatosporales</taxon>
        <taxon>Streptomycetaceae</taxon>
        <taxon>Streptomyces</taxon>
        <taxon>Streptomyces albidoflavus group</taxon>
    </lineage>
</organism>
<keyword id="KW-0238">DNA-binding</keyword>
<keyword id="KW-0413">Isomerase</keyword>
<keyword id="KW-0460">Magnesium</keyword>
<keyword id="KW-0479">Metal-binding</keyword>
<keyword id="KW-1185">Reference proteome</keyword>
<keyword id="KW-0799">Topoisomerase</keyword>
<accession>Q9X909</accession>
<feature type="chain" id="PRO_0000145166" description="DNA topoisomerase 1">
    <location>
        <begin position="1"/>
        <end position="952"/>
    </location>
</feature>
<feature type="domain" description="Toprim" evidence="1">
    <location>
        <begin position="12"/>
        <end position="135"/>
    </location>
</feature>
<feature type="domain" description="Topo IA-type catalytic" evidence="2">
    <location>
        <begin position="150"/>
        <end position="602"/>
    </location>
</feature>
<feature type="region of interest" description="Interaction with DNA" evidence="1">
    <location>
        <begin position="184"/>
        <end position="189"/>
    </location>
</feature>
<feature type="region of interest" description="Disordered" evidence="3">
    <location>
        <begin position="847"/>
        <end position="952"/>
    </location>
</feature>
<feature type="compositionally biased region" description="Basic and acidic residues" evidence="3">
    <location>
        <begin position="871"/>
        <end position="884"/>
    </location>
</feature>
<feature type="compositionally biased region" description="Basic residues" evidence="3">
    <location>
        <begin position="885"/>
        <end position="906"/>
    </location>
</feature>
<feature type="compositionally biased region" description="Low complexity" evidence="3">
    <location>
        <begin position="907"/>
        <end position="930"/>
    </location>
</feature>
<feature type="compositionally biased region" description="Low complexity" evidence="3">
    <location>
        <begin position="937"/>
        <end position="952"/>
    </location>
</feature>
<feature type="active site" description="O-(5'-phospho-DNA)-tyrosine intermediate" evidence="2">
    <location>
        <position position="334"/>
    </location>
</feature>
<feature type="binding site" evidence="1">
    <location>
        <position position="18"/>
    </location>
    <ligand>
        <name>Mg(2+)</name>
        <dbReference type="ChEBI" id="CHEBI:18420"/>
        <note>catalytic</note>
    </ligand>
</feature>
<feature type="binding site" evidence="1">
    <location>
        <position position="104"/>
    </location>
    <ligand>
        <name>Mg(2+)</name>
        <dbReference type="ChEBI" id="CHEBI:18420"/>
        <note>catalytic</note>
    </ligand>
</feature>
<feature type="site" description="Interaction with DNA" evidence="1">
    <location>
        <position position="42"/>
    </location>
</feature>
<feature type="site" description="Interaction with DNA" evidence="1">
    <location>
        <position position="160"/>
    </location>
</feature>
<feature type="site" description="Interaction with DNA" evidence="1">
    <location>
        <position position="161"/>
    </location>
</feature>
<feature type="site" description="Interaction with DNA" evidence="1">
    <location>
        <position position="164"/>
    </location>
</feature>
<feature type="site" description="Interaction with DNA" evidence="1">
    <location>
        <position position="169"/>
    </location>
</feature>
<feature type="site" description="Interaction with DNA" evidence="1">
    <location>
        <position position="176"/>
    </location>
</feature>
<feature type="site" description="Interaction with DNA" evidence="1">
    <location>
        <position position="336"/>
    </location>
</feature>
<feature type="site" description="Interaction with DNA" evidence="1">
    <location>
        <position position="534"/>
    </location>
</feature>
<gene>
    <name evidence="1" type="primary">topA</name>
    <name type="ordered locus">SCO3543</name>
    <name type="ORF">SCH5.06c</name>
</gene>
<dbReference type="EC" id="5.6.2.1" evidence="1"/>
<dbReference type="EMBL" id="AL939116">
    <property type="protein sequence ID" value="CAB38480.1"/>
    <property type="molecule type" value="Genomic_DNA"/>
</dbReference>
<dbReference type="PIR" id="T36664">
    <property type="entry name" value="T36664"/>
</dbReference>
<dbReference type="RefSeq" id="NP_627741.1">
    <property type="nucleotide sequence ID" value="NC_003888.3"/>
</dbReference>
<dbReference type="RefSeq" id="WP_011029075.1">
    <property type="nucleotide sequence ID" value="NZ_VNID01000003.1"/>
</dbReference>
<dbReference type="SMR" id="Q9X909"/>
<dbReference type="FunCoup" id="Q9X909">
    <property type="interactions" value="310"/>
</dbReference>
<dbReference type="STRING" id="100226.gene:17761165"/>
<dbReference type="PaxDb" id="100226-SCO3543"/>
<dbReference type="GeneID" id="91385516"/>
<dbReference type="KEGG" id="sco:SCO3543"/>
<dbReference type="PATRIC" id="fig|100226.15.peg.3599"/>
<dbReference type="eggNOG" id="COG0550">
    <property type="taxonomic scope" value="Bacteria"/>
</dbReference>
<dbReference type="eggNOG" id="COG1754">
    <property type="taxonomic scope" value="Bacteria"/>
</dbReference>
<dbReference type="HOGENOM" id="CLU_002929_2_0_11"/>
<dbReference type="InParanoid" id="Q9X909"/>
<dbReference type="OrthoDB" id="9804262at2"/>
<dbReference type="PhylomeDB" id="Q9X909"/>
<dbReference type="Proteomes" id="UP000001973">
    <property type="component" value="Chromosome"/>
</dbReference>
<dbReference type="GO" id="GO:0003677">
    <property type="term" value="F:DNA binding"/>
    <property type="evidence" value="ECO:0007669"/>
    <property type="project" value="UniProtKB-KW"/>
</dbReference>
<dbReference type="GO" id="GO:0003917">
    <property type="term" value="F:DNA topoisomerase type I (single strand cut, ATP-independent) activity"/>
    <property type="evidence" value="ECO:0007669"/>
    <property type="project" value="UniProtKB-UniRule"/>
</dbReference>
<dbReference type="GO" id="GO:0046872">
    <property type="term" value="F:metal ion binding"/>
    <property type="evidence" value="ECO:0007669"/>
    <property type="project" value="UniProtKB-KW"/>
</dbReference>
<dbReference type="GO" id="GO:0007059">
    <property type="term" value="P:chromosome segregation"/>
    <property type="evidence" value="ECO:0000315"/>
    <property type="project" value="CACAO"/>
</dbReference>
<dbReference type="GO" id="GO:0006265">
    <property type="term" value="P:DNA topological change"/>
    <property type="evidence" value="ECO:0007669"/>
    <property type="project" value="UniProtKB-UniRule"/>
</dbReference>
<dbReference type="CDD" id="cd00186">
    <property type="entry name" value="TOP1Ac"/>
    <property type="match status" value="1"/>
</dbReference>
<dbReference type="CDD" id="cd03363">
    <property type="entry name" value="TOPRIM_TopoIA_TopoI"/>
    <property type="match status" value="1"/>
</dbReference>
<dbReference type="Gene3D" id="3.40.50.140">
    <property type="match status" value="1"/>
</dbReference>
<dbReference type="Gene3D" id="1.10.460.10">
    <property type="entry name" value="Topoisomerase I, domain 2"/>
    <property type="match status" value="1"/>
</dbReference>
<dbReference type="Gene3D" id="2.70.20.10">
    <property type="entry name" value="Topoisomerase I, domain 3"/>
    <property type="match status" value="1"/>
</dbReference>
<dbReference type="Gene3D" id="1.10.290.10">
    <property type="entry name" value="Topoisomerase I, domain 4"/>
    <property type="match status" value="1"/>
</dbReference>
<dbReference type="HAMAP" id="MF_00952">
    <property type="entry name" value="Topoisom_1_prok"/>
    <property type="match status" value="1"/>
</dbReference>
<dbReference type="InterPro" id="IPR000380">
    <property type="entry name" value="Topo_IA"/>
</dbReference>
<dbReference type="InterPro" id="IPR003601">
    <property type="entry name" value="Topo_IA_2"/>
</dbReference>
<dbReference type="InterPro" id="IPR023406">
    <property type="entry name" value="Topo_IA_AS"/>
</dbReference>
<dbReference type="InterPro" id="IPR013497">
    <property type="entry name" value="Topo_IA_cen"/>
</dbReference>
<dbReference type="InterPro" id="IPR013824">
    <property type="entry name" value="Topo_IA_cen_sub1"/>
</dbReference>
<dbReference type="InterPro" id="IPR013825">
    <property type="entry name" value="Topo_IA_cen_sub2"/>
</dbReference>
<dbReference type="InterPro" id="IPR013826">
    <property type="entry name" value="Topo_IA_cen_sub3"/>
</dbReference>
<dbReference type="InterPro" id="IPR023405">
    <property type="entry name" value="Topo_IA_core_domain"/>
</dbReference>
<dbReference type="InterPro" id="IPR003602">
    <property type="entry name" value="Topo_IA_DNA-bd_dom"/>
</dbReference>
<dbReference type="InterPro" id="IPR005733">
    <property type="entry name" value="TopoI_bac-type"/>
</dbReference>
<dbReference type="InterPro" id="IPR028612">
    <property type="entry name" value="Topoisom_1_IA"/>
</dbReference>
<dbReference type="InterPro" id="IPR025589">
    <property type="entry name" value="Toprim_C_rpt"/>
</dbReference>
<dbReference type="InterPro" id="IPR006171">
    <property type="entry name" value="TOPRIM_dom"/>
</dbReference>
<dbReference type="InterPro" id="IPR034149">
    <property type="entry name" value="TOPRIM_TopoI"/>
</dbReference>
<dbReference type="NCBIfam" id="TIGR01051">
    <property type="entry name" value="topA_bact"/>
    <property type="match status" value="1"/>
</dbReference>
<dbReference type="PANTHER" id="PTHR42785:SF1">
    <property type="entry name" value="DNA TOPOISOMERASE"/>
    <property type="match status" value="1"/>
</dbReference>
<dbReference type="PANTHER" id="PTHR42785">
    <property type="entry name" value="DNA TOPOISOMERASE, TYPE IA, CORE"/>
    <property type="match status" value="1"/>
</dbReference>
<dbReference type="Pfam" id="PF01131">
    <property type="entry name" value="Topoisom_bac"/>
    <property type="match status" value="1"/>
</dbReference>
<dbReference type="Pfam" id="PF01751">
    <property type="entry name" value="Toprim"/>
    <property type="match status" value="1"/>
</dbReference>
<dbReference type="Pfam" id="PF13368">
    <property type="entry name" value="Toprim_C_rpt"/>
    <property type="match status" value="4"/>
</dbReference>
<dbReference type="PRINTS" id="PR00417">
    <property type="entry name" value="PRTPISMRASEI"/>
</dbReference>
<dbReference type="SMART" id="SM00437">
    <property type="entry name" value="TOP1Ac"/>
    <property type="match status" value="1"/>
</dbReference>
<dbReference type="SMART" id="SM00436">
    <property type="entry name" value="TOP1Bc"/>
    <property type="match status" value="1"/>
</dbReference>
<dbReference type="SMART" id="SM00493">
    <property type="entry name" value="TOPRIM"/>
    <property type="match status" value="1"/>
</dbReference>
<dbReference type="SUPFAM" id="SSF56712">
    <property type="entry name" value="Prokaryotic type I DNA topoisomerase"/>
    <property type="match status" value="1"/>
</dbReference>
<dbReference type="PROSITE" id="PS00396">
    <property type="entry name" value="TOPO_IA_1"/>
    <property type="match status" value="1"/>
</dbReference>
<dbReference type="PROSITE" id="PS52039">
    <property type="entry name" value="TOPO_IA_2"/>
    <property type="match status" value="1"/>
</dbReference>
<dbReference type="PROSITE" id="PS50880">
    <property type="entry name" value="TOPRIM"/>
    <property type="match status" value="1"/>
</dbReference>
<reference key="1">
    <citation type="journal article" date="2002" name="Nature">
        <title>Complete genome sequence of the model actinomycete Streptomyces coelicolor A3(2).</title>
        <authorList>
            <person name="Bentley S.D."/>
            <person name="Chater K.F."/>
            <person name="Cerdeno-Tarraga A.-M."/>
            <person name="Challis G.L."/>
            <person name="Thomson N.R."/>
            <person name="James K.D."/>
            <person name="Harris D.E."/>
            <person name="Quail M.A."/>
            <person name="Kieser H."/>
            <person name="Harper D."/>
            <person name="Bateman A."/>
            <person name="Brown S."/>
            <person name="Chandra G."/>
            <person name="Chen C.W."/>
            <person name="Collins M."/>
            <person name="Cronin A."/>
            <person name="Fraser A."/>
            <person name="Goble A."/>
            <person name="Hidalgo J."/>
            <person name="Hornsby T."/>
            <person name="Howarth S."/>
            <person name="Huang C.-H."/>
            <person name="Kieser T."/>
            <person name="Larke L."/>
            <person name="Murphy L.D."/>
            <person name="Oliver K."/>
            <person name="O'Neil S."/>
            <person name="Rabbinowitsch E."/>
            <person name="Rajandream M.A."/>
            <person name="Rutherford K.M."/>
            <person name="Rutter S."/>
            <person name="Seeger K."/>
            <person name="Saunders D."/>
            <person name="Sharp S."/>
            <person name="Squares R."/>
            <person name="Squares S."/>
            <person name="Taylor K."/>
            <person name="Warren T."/>
            <person name="Wietzorrek A."/>
            <person name="Woodward J.R."/>
            <person name="Barrell B.G."/>
            <person name="Parkhill J."/>
            <person name="Hopwood D.A."/>
        </authorList>
    </citation>
    <scope>NUCLEOTIDE SEQUENCE [LARGE SCALE GENOMIC DNA]</scope>
    <source>
        <strain>ATCC BAA-471 / A3(2) / M145</strain>
    </source>
</reference>
<reference key="2">
    <citation type="journal article" date="2013" name="Nucleic Acids Res.">
        <title>A novel nucleoid-associated protein specific to the actinobacteria.</title>
        <authorList>
            <person name="Swiercz J.P."/>
            <person name="Nanji T."/>
            <person name="Gloyd M."/>
            <person name="Guarne A."/>
            <person name="Elliot M.A."/>
        </authorList>
    </citation>
    <scope>FUNCTION</scope>
    <source>
        <strain>A3(2) / M600</strain>
    </source>
</reference>
<name>TOP1_STRCO</name>
<proteinExistence type="inferred from homology"/>
<comment type="function">
    <text evidence="1">Releases the supercoiling and torsional tension of DNA, which is introduced during the DNA replication and transcription, by transiently cleaving and rejoining one strand of the DNA duplex. Introduces a single-strand break via transesterification at a target site in duplex DNA. The scissile phosphodiester is attacked by the catalytic tyrosine of the enzyme, resulting in the formation of a DNA-(5'-phosphotyrosyl)-enzyme intermediate and the expulsion of a 3'-OH DNA strand. The free DNA strand then undergoes passage around the unbroken strand, thus removing DNA supercoils. Finally, in the religation step, the DNA 3'-OH attacks the covalent intermediate to expel the active-site tyrosine and restore the DNA phosphodiester backbone.</text>
</comment>
<comment type="function">
    <text evidence="4">Relaxes supercoiled plasmid in vitro; in the presence of sIHF (integration host factor) relaxation is decreased.</text>
</comment>
<comment type="catalytic activity">
    <reaction evidence="1">
        <text>ATP-independent breakage of single-stranded DNA, followed by passage and rejoining.</text>
        <dbReference type="EC" id="5.6.2.1"/>
    </reaction>
</comment>
<comment type="cofactor">
    <cofactor evidence="1">
        <name>Mg(2+)</name>
        <dbReference type="ChEBI" id="CHEBI:18420"/>
    </cofactor>
</comment>
<comment type="subunit">
    <text evidence="1">Monomer.</text>
</comment>
<comment type="similarity">
    <text evidence="1">Belongs to the type IA topoisomerase family.</text>
</comment>